<organism>
    <name type="scientific">Amphidinium operculatum</name>
    <name type="common">Dinoflagellate</name>
    <dbReference type="NCBI Taxonomy" id="107036"/>
    <lineage>
        <taxon>Eukaryota</taxon>
        <taxon>Sar</taxon>
        <taxon>Alveolata</taxon>
        <taxon>Dinophyceae</taxon>
        <taxon>Amphidiniales</taxon>
        <taxon>Amphidiniaceae</taxon>
        <taxon>Amphidinium</taxon>
    </lineage>
</organism>
<protein>
    <recommendedName>
        <fullName evidence="1">Photosystem II protein D1</fullName>
        <shortName evidence="1">PSII D1 protein</shortName>
        <ecNumber evidence="1">1.10.3.9</ecNumber>
    </recommendedName>
    <alternativeName>
        <fullName evidence="1">Photosystem II Q(B) protein</fullName>
    </alternativeName>
</protein>
<sequence>MTSLIRSNSWGSFVQTITSSSNRLYIGWFGLLVFPLLSLATVAYITAFFLAPAVDIDGIREPVAGSLIYGNNIISGAVIPSSNAIGVHFYPLWESLGLDEWLYNGGTYQFVVFHFFLGVCGWMGREWEFSYRLGMRPWIFVAFSAPIAAAAAVFIIYPIGQGSFSDGMPLGIQGTFNFMLVFQAEHKILMHPFHILGVAGVFGGSLFSAMHGSLVSSSLLAETAGSESLNNGYVFGQEDETYSISAAHAYFGRLIFQYASFNNSRSLHFFLAAWPVIGIWFTSLGVATMAFNLNGFNFNQSILDESGHYINSWADILNRADLGIEVMHERNAHNFPLDLA</sequence>
<evidence type="ECO:0000255" key="1">
    <source>
        <dbReference type="HAMAP-Rule" id="MF_01379"/>
    </source>
</evidence>
<feature type="chain" id="PRO_0000316493" description="Photosystem II protein D1" evidence="1">
    <location>
        <begin position="1"/>
        <end position="340"/>
    </location>
</feature>
<feature type="transmembrane region" description="Helical" evidence="1">
    <location>
        <begin position="25"/>
        <end position="42"/>
    </location>
</feature>
<feature type="transmembrane region" description="Helical" evidence="1">
    <location>
        <begin position="114"/>
        <end position="129"/>
    </location>
</feature>
<feature type="transmembrane region" description="Helical" evidence="1">
    <location>
        <begin position="138"/>
        <end position="152"/>
    </location>
</feature>
<feature type="transmembrane region" description="Helical" evidence="1">
    <location>
        <begin position="193"/>
        <end position="214"/>
    </location>
</feature>
<feature type="transmembrane region" description="Helical" evidence="1">
    <location>
        <begin position="270"/>
        <end position="284"/>
    </location>
</feature>
<feature type="binding site" description="axial binding residue" evidence="1">
    <location>
        <position position="114"/>
    </location>
    <ligand>
        <name>chlorophyll a</name>
        <dbReference type="ChEBI" id="CHEBI:58416"/>
        <label>ChlzD1</label>
    </ligand>
    <ligandPart>
        <name>Mg</name>
        <dbReference type="ChEBI" id="CHEBI:25107"/>
    </ligandPart>
</feature>
<feature type="binding site" evidence="1">
    <location>
        <position position="122"/>
    </location>
    <ligand>
        <name>pheophytin a</name>
        <dbReference type="ChEBI" id="CHEBI:136840"/>
        <label>D1</label>
    </ligand>
</feature>
<feature type="binding site" evidence="1">
    <location>
        <position position="166"/>
    </location>
    <ligand>
        <name>[CaMn4O5] cluster</name>
        <dbReference type="ChEBI" id="CHEBI:189552"/>
    </ligand>
</feature>
<feature type="binding site" evidence="1">
    <location>
        <position position="185"/>
    </location>
    <ligand>
        <name>[CaMn4O5] cluster</name>
        <dbReference type="ChEBI" id="CHEBI:189552"/>
    </ligand>
</feature>
<feature type="binding site" description="axial binding residue" evidence="1">
    <location>
        <position position="194"/>
    </location>
    <ligand>
        <name>chlorophyll a</name>
        <dbReference type="ChEBI" id="CHEBI:58416"/>
        <label>PD1</label>
    </ligand>
    <ligandPart>
        <name>Mg</name>
        <dbReference type="ChEBI" id="CHEBI:25107"/>
    </ligandPart>
</feature>
<feature type="binding site" evidence="1">
    <location>
        <position position="211"/>
    </location>
    <ligand>
        <name>a quinone</name>
        <dbReference type="ChEBI" id="CHEBI:132124"/>
        <label>B</label>
    </ligand>
</feature>
<feature type="binding site" evidence="1">
    <location>
        <position position="211"/>
    </location>
    <ligand>
        <name>Fe cation</name>
        <dbReference type="ChEBI" id="CHEBI:24875"/>
        <note>ligand shared with heterodimeric partner</note>
    </ligand>
</feature>
<feature type="binding site" evidence="1">
    <location>
        <begin position="260"/>
        <end position="261"/>
    </location>
    <ligand>
        <name>a quinone</name>
        <dbReference type="ChEBI" id="CHEBI:132124"/>
        <label>B</label>
    </ligand>
</feature>
<feature type="binding site" evidence="1">
    <location>
        <position position="268"/>
    </location>
    <ligand>
        <name>Fe cation</name>
        <dbReference type="ChEBI" id="CHEBI:24875"/>
        <note>ligand shared with heterodimeric partner</note>
    </ligand>
</feature>
<feature type="binding site" evidence="1">
    <location>
        <position position="328"/>
    </location>
    <ligand>
        <name>[CaMn4O5] cluster</name>
        <dbReference type="ChEBI" id="CHEBI:189552"/>
    </ligand>
</feature>
<feature type="binding site" evidence="1">
    <location>
        <position position="329"/>
    </location>
    <ligand>
        <name>[CaMn4O5] cluster</name>
        <dbReference type="ChEBI" id="CHEBI:189552"/>
    </ligand>
</feature>
<feature type="binding site" evidence="1">
    <location>
        <position position="338"/>
    </location>
    <ligand>
        <name>[CaMn4O5] cluster</name>
        <dbReference type="ChEBI" id="CHEBI:189552"/>
    </ligand>
</feature>
<feature type="binding site" evidence="1">
    <location>
        <position position="340"/>
    </location>
    <ligand>
        <name>[CaMn4O5] cluster</name>
        <dbReference type="ChEBI" id="CHEBI:189552"/>
    </ligand>
</feature>
<feature type="site" description="Tyrosine radical intermediate" evidence="1">
    <location>
        <position position="157"/>
    </location>
</feature>
<feature type="site" description="Stabilizes free radical intermediate" evidence="1">
    <location>
        <position position="186"/>
    </location>
</feature>
<reference key="1">
    <citation type="journal article" date="2000" name="Mol. Gen. Genet.">
        <title>Minicircular plastid DNA in the dinoflagellate Amphidinium operculatum.</title>
        <authorList>
            <person name="Barbrook A.C."/>
            <person name="Howe C.J."/>
        </authorList>
    </citation>
    <scope>NUCLEOTIDE SEQUENCE [GENOMIC DNA]</scope>
    <source>
        <strain>CCAP 1102/6</strain>
    </source>
</reference>
<accession>Q7HP56</accession>
<keyword id="KW-0106">Calcium</keyword>
<keyword id="KW-0148">Chlorophyll</keyword>
<keyword id="KW-0150">Chloroplast</keyword>
<keyword id="KW-0157">Chromophore</keyword>
<keyword id="KW-0249">Electron transport</keyword>
<keyword id="KW-0359">Herbicide resistance</keyword>
<keyword id="KW-0408">Iron</keyword>
<keyword id="KW-0460">Magnesium</keyword>
<keyword id="KW-0464">Manganese</keyword>
<keyword id="KW-0472">Membrane</keyword>
<keyword id="KW-0479">Metal-binding</keyword>
<keyword id="KW-0560">Oxidoreductase</keyword>
<keyword id="KW-0602">Photosynthesis</keyword>
<keyword id="KW-0604">Photosystem II</keyword>
<keyword id="KW-0934">Plastid</keyword>
<keyword id="KW-0793">Thylakoid</keyword>
<keyword id="KW-0812">Transmembrane</keyword>
<keyword id="KW-1133">Transmembrane helix</keyword>
<keyword id="KW-0813">Transport</keyword>
<geneLocation type="chloroplast"/>
<gene>
    <name evidence="1" type="primary">psbA</name>
</gene>
<name>PSBA_AMPOP</name>
<comment type="function">
    <text evidence="1">Photosystem II (PSII) is a light-driven water:plastoquinone oxidoreductase that uses light energy to abstract electrons from H(2)O, generating O(2) and a proton gradient subsequently used for ATP formation. It consists of a core antenna complex that captures photons, and an electron transfer chain that converts photonic excitation into a charge separation. The D1/D2 (PsbA/PsbD) reaction center heterodimer binds P680, the primary electron donor of PSII as well as several subsequent electron acceptors.</text>
</comment>
<comment type="catalytic activity">
    <reaction evidence="1">
        <text>2 a plastoquinone + 4 hnu + 2 H2O = 2 a plastoquinol + O2</text>
        <dbReference type="Rhea" id="RHEA:36359"/>
        <dbReference type="Rhea" id="RHEA-COMP:9561"/>
        <dbReference type="Rhea" id="RHEA-COMP:9562"/>
        <dbReference type="ChEBI" id="CHEBI:15377"/>
        <dbReference type="ChEBI" id="CHEBI:15379"/>
        <dbReference type="ChEBI" id="CHEBI:17757"/>
        <dbReference type="ChEBI" id="CHEBI:30212"/>
        <dbReference type="ChEBI" id="CHEBI:62192"/>
        <dbReference type="EC" id="1.10.3.9"/>
    </reaction>
</comment>
<comment type="cofactor">
    <text evidence="1">The D1/D2 heterodimer binds P680, chlorophylls that are the primary electron donor of PSII, and subsequent electron acceptors. It shares a non-heme iron and each subunit binds pheophytin, quinone, additional chlorophylls, carotenoids and lipids. D1 provides most of the ligands for the Mn4-Ca-O5 cluster of the oxygen-evolving complex (OEC). There is also a Cl(-1) ion associated with D1 and D2, which is required for oxygen evolution. The PSII complex binds additional chlorophylls, carotenoids and specific lipids.</text>
</comment>
<comment type="subunit">
    <text evidence="1">PSII is composed of 1 copy each of membrane proteins PsbA, PsbB, PsbC, PsbD, PsbE, PsbF, PsbH, PsbI, PsbJ, PsbK, PsbL, PsbM, PsbT, PsbX, PsbY, PsbZ, Psb30/Ycf12, at least 3 peripheral proteins of the oxygen-evolving complex and a large number of cofactors. It forms dimeric complexes.</text>
</comment>
<comment type="subcellular location">
    <subcellularLocation>
        <location evidence="1">Plastid</location>
        <location evidence="1">Chloroplast thylakoid membrane</location>
        <topology evidence="1">Multi-pass membrane protein</topology>
    </subcellularLocation>
</comment>
<comment type="PTM">
    <text evidence="1">Tyr-157 forms a radical intermediate that is referred to as redox-active TyrZ, YZ or Y-Z.</text>
</comment>
<comment type="miscellaneous">
    <text evidence="1">2 of the reaction center chlorophylls (ChlD1 and ChlD2) are entirely coordinated by water.</text>
</comment>
<comment type="miscellaneous">
    <text evidence="1">Herbicides such as atrazine, BNT, diuron or ioxynil bind in the Q(B) binding site and block subsequent electron transfer.</text>
</comment>
<comment type="similarity">
    <text evidence="1">Belongs to the reaction center PufL/M/PsbA/D family.</text>
</comment>
<dbReference type="EC" id="1.10.3.9" evidence="1"/>
<dbReference type="EMBL" id="AJ250262">
    <property type="protein sequence ID" value="CAB75842.1"/>
    <property type="molecule type" value="Genomic_DNA"/>
</dbReference>
<dbReference type="SMR" id="Q7HP56"/>
<dbReference type="GO" id="GO:0009535">
    <property type="term" value="C:chloroplast thylakoid membrane"/>
    <property type="evidence" value="ECO:0007669"/>
    <property type="project" value="UniProtKB-SubCell"/>
</dbReference>
<dbReference type="GO" id="GO:0009523">
    <property type="term" value="C:photosystem II"/>
    <property type="evidence" value="ECO:0007669"/>
    <property type="project" value="UniProtKB-KW"/>
</dbReference>
<dbReference type="GO" id="GO:0016168">
    <property type="term" value="F:chlorophyll binding"/>
    <property type="evidence" value="ECO:0007669"/>
    <property type="project" value="UniProtKB-UniRule"/>
</dbReference>
<dbReference type="GO" id="GO:0045156">
    <property type="term" value="F:electron transporter, transferring electrons within the cyclic electron transport pathway of photosynthesis activity"/>
    <property type="evidence" value="ECO:0007669"/>
    <property type="project" value="InterPro"/>
</dbReference>
<dbReference type="GO" id="GO:0005506">
    <property type="term" value="F:iron ion binding"/>
    <property type="evidence" value="ECO:0007669"/>
    <property type="project" value="UniProtKB-UniRule"/>
</dbReference>
<dbReference type="GO" id="GO:0016682">
    <property type="term" value="F:oxidoreductase activity, acting on diphenols and related substances as donors, oxygen as acceptor"/>
    <property type="evidence" value="ECO:0007669"/>
    <property type="project" value="UniProtKB-UniRule"/>
</dbReference>
<dbReference type="GO" id="GO:0009772">
    <property type="term" value="P:photosynthetic electron transport in photosystem II"/>
    <property type="evidence" value="ECO:0007669"/>
    <property type="project" value="InterPro"/>
</dbReference>
<dbReference type="GO" id="GO:0009635">
    <property type="term" value="P:response to herbicide"/>
    <property type="evidence" value="ECO:0007669"/>
    <property type="project" value="UniProtKB-KW"/>
</dbReference>
<dbReference type="Gene3D" id="1.20.85.10">
    <property type="entry name" value="Photosystem II protein D1-like"/>
    <property type="match status" value="1"/>
</dbReference>
<dbReference type="HAMAP" id="MF_01379">
    <property type="entry name" value="PSII_PsbA_D1"/>
    <property type="match status" value="1"/>
</dbReference>
<dbReference type="InterPro" id="IPR055266">
    <property type="entry name" value="D1/D2"/>
</dbReference>
<dbReference type="InterPro" id="IPR036854">
    <property type="entry name" value="Photo_II_D1/D2_sf"/>
</dbReference>
<dbReference type="InterPro" id="IPR000484">
    <property type="entry name" value="Photo_RC_L/M"/>
</dbReference>
<dbReference type="InterPro" id="IPR005867">
    <property type="entry name" value="PSII_D1"/>
</dbReference>
<dbReference type="NCBIfam" id="TIGR01151">
    <property type="entry name" value="psbA"/>
    <property type="match status" value="1"/>
</dbReference>
<dbReference type="PANTHER" id="PTHR33149:SF12">
    <property type="entry name" value="PHOTOSYSTEM II D2 PROTEIN"/>
    <property type="match status" value="1"/>
</dbReference>
<dbReference type="PANTHER" id="PTHR33149">
    <property type="entry name" value="PHOTOSYSTEM II PROTEIN D1"/>
    <property type="match status" value="1"/>
</dbReference>
<dbReference type="Pfam" id="PF00124">
    <property type="entry name" value="Photo_RC"/>
    <property type="match status" value="1"/>
</dbReference>
<dbReference type="PRINTS" id="PR00256">
    <property type="entry name" value="REACTNCENTRE"/>
</dbReference>
<dbReference type="SUPFAM" id="SSF81483">
    <property type="entry name" value="Bacterial photosystem II reaction centre, L and M subunits"/>
    <property type="match status" value="1"/>
</dbReference>
<proteinExistence type="inferred from homology"/>